<evidence type="ECO:0000255" key="1">
    <source>
        <dbReference type="HAMAP-Rule" id="MF_01588"/>
    </source>
</evidence>
<name>DNLJ_RALN1</name>
<feature type="chain" id="PRO_0000313389" description="DNA ligase">
    <location>
        <begin position="1"/>
        <end position="813"/>
    </location>
</feature>
<feature type="domain" description="BRCT" evidence="1">
    <location>
        <begin position="729"/>
        <end position="813"/>
    </location>
</feature>
<feature type="active site" description="N6-AMP-lysine intermediate" evidence="1">
    <location>
        <position position="129"/>
    </location>
</feature>
<feature type="binding site" evidence="1">
    <location>
        <begin position="41"/>
        <end position="45"/>
    </location>
    <ligand>
        <name>NAD(+)</name>
        <dbReference type="ChEBI" id="CHEBI:57540"/>
    </ligand>
</feature>
<feature type="binding site" evidence="1">
    <location>
        <begin position="90"/>
        <end position="91"/>
    </location>
    <ligand>
        <name>NAD(+)</name>
        <dbReference type="ChEBI" id="CHEBI:57540"/>
    </ligand>
</feature>
<feature type="binding site" evidence="1">
    <location>
        <position position="127"/>
    </location>
    <ligand>
        <name>NAD(+)</name>
        <dbReference type="ChEBI" id="CHEBI:57540"/>
    </ligand>
</feature>
<feature type="binding site" evidence="1">
    <location>
        <position position="150"/>
    </location>
    <ligand>
        <name>NAD(+)</name>
        <dbReference type="ChEBI" id="CHEBI:57540"/>
    </ligand>
</feature>
<feature type="binding site" evidence="1">
    <location>
        <position position="189"/>
    </location>
    <ligand>
        <name>NAD(+)</name>
        <dbReference type="ChEBI" id="CHEBI:57540"/>
    </ligand>
</feature>
<feature type="binding site" evidence="1">
    <location>
        <position position="307"/>
    </location>
    <ligand>
        <name>NAD(+)</name>
        <dbReference type="ChEBI" id="CHEBI:57540"/>
    </ligand>
</feature>
<feature type="binding site" evidence="1">
    <location>
        <position position="331"/>
    </location>
    <ligand>
        <name>NAD(+)</name>
        <dbReference type="ChEBI" id="CHEBI:57540"/>
    </ligand>
</feature>
<feature type="binding site" evidence="1">
    <location>
        <position position="440"/>
    </location>
    <ligand>
        <name>Zn(2+)</name>
        <dbReference type="ChEBI" id="CHEBI:29105"/>
    </ligand>
</feature>
<feature type="binding site" evidence="1">
    <location>
        <position position="443"/>
    </location>
    <ligand>
        <name>Zn(2+)</name>
        <dbReference type="ChEBI" id="CHEBI:29105"/>
    </ligand>
</feature>
<feature type="binding site" evidence="1">
    <location>
        <position position="458"/>
    </location>
    <ligand>
        <name>Zn(2+)</name>
        <dbReference type="ChEBI" id="CHEBI:29105"/>
    </ligand>
</feature>
<feature type="binding site" evidence="1">
    <location>
        <position position="464"/>
    </location>
    <ligand>
        <name>Zn(2+)</name>
        <dbReference type="ChEBI" id="CHEBI:29105"/>
    </ligand>
</feature>
<reference key="1">
    <citation type="journal article" date="2002" name="Nature">
        <title>Genome sequence of the plant pathogen Ralstonia solanacearum.</title>
        <authorList>
            <person name="Salanoubat M."/>
            <person name="Genin S."/>
            <person name="Artiguenave F."/>
            <person name="Gouzy J."/>
            <person name="Mangenot S."/>
            <person name="Arlat M."/>
            <person name="Billault A."/>
            <person name="Brottier P."/>
            <person name="Camus J.-C."/>
            <person name="Cattolico L."/>
            <person name="Chandler M."/>
            <person name="Choisne N."/>
            <person name="Claudel-Renard C."/>
            <person name="Cunnac S."/>
            <person name="Demange N."/>
            <person name="Gaspin C."/>
            <person name="Lavie M."/>
            <person name="Moisan A."/>
            <person name="Robert C."/>
            <person name="Saurin W."/>
            <person name="Schiex T."/>
            <person name="Siguier P."/>
            <person name="Thebault P."/>
            <person name="Whalen M."/>
            <person name="Wincker P."/>
            <person name="Levy M."/>
            <person name="Weissenbach J."/>
            <person name="Boucher C.A."/>
        </authorList>
    </citation>
    <scope>NUCLEOTIDE SEQUENCE [LARGE SCALE GENOMIC DNA]</scope>
    <source>
        <strain>ATCC BAA-1114 / GMI1000</strain>
    </source>
</reference>
<dbReference type="EC" id="6.5.1.2" evidence="1"/>
<dbReference type="EMBL" id="AL646052">
    <property type="protein sequence ID" value="CAD15100.1"/>
    <property type="molecule type" value="Genomic_DNA"/>
</dbReference>
<dbReference type="RefSeq" id="WP_011001347.1">
    <property type="nucleotide sequence ID" value="NC_003295.1"/>
</dbReference>
<dbReference type="SMR" id="Q8XZJ7"/>
<dbReference type="STRING" id="267608.RSc1398"/>
<dbReference type="EnsemblBacteria" id="CAD15100">
    <property type="protein sequence ID" value="CAD15100"/>
    <property type="gene ID" value="RSc1398"/>
</dbReference>
<dbReference type="KEGG" id="rso:RSc1398"/>
<dbReference type="PATRIC" id="fig|267608.8.peg.1427"/>
<dbReference type="eggNOG" id="COG0272">
    <property type="taxonomic scope" value="Bacteria"/>
</dbReference>
<dbReference type="HOGENOM" id="CLU_007764_2_1_4"/>
<dbReference type="Proteomes" id="UP000001436">
    <property type="component" value="Chromosome"/>
</dbReference>
<dbReference type="GO" id="GO:0005829">
    <property type="term" value="C:cytosol"/>
    <property type="evidence" value="ECO:0007669"/>
    <property type="project" value="TreeGrafter"/>
</dbReference>
<dbReference type="GO" id="GO:0003677">
    <property type="term" value="F:DNA binding"/>
    <property type="evidence" value="ECO:0007669"/>
    <property type="project" value="InterPro"/>
</dbReference>
<dbReference type="GO" id="GO:0003911">
    <property type="term" value="F:DNA ligase (NAD+) activity"/>
    <property type="evidence" value="ECO:0007669"/>
    <property type="project" value="UniProtKB-UniRule"/>
</dbReference>
<dbReference type="GO" id="GO:0046872">
    <property type="term" value="F:metal ion binding"/>
    <property type="evidence" value="ECO:0007669"/>
    <property type="project" value="UniProtKB-KW"/>
</dbReference>
<dbReference type="GO" id="GO:0006281">
    <property type="term" value="P:DNA repair"/>
    <property type="evidence" value="ECO:0007669"/>
    <property type="project" value="UniProtKB-KW"/>
</dbReference>
<dbReference type="GO" id="GO:0006260">
    <property type="term" value="P:DNA replication"/>
    <property type="evidence" value="ECO:0007669"/>
    <property type="project" value="UniProtKB-KW"/>
</dbReference>
<dbReference type="CDD" id="cd17748">
    <property type="entry name" value="BRCT_DNA_ligase_like"/>
    <property type="match status" value="1"/>
</dbReference>
<dbReference type="CDD" id="cd00114">
    <property type="entry name" value="LIGANc"/>
    <property type="match status" value="1"/>
</dbReference>
<dbReference type="FunFam" id="1.10.150.20:FF:000006">
    <property type="entry name" value="DNA ligase"/>
    <property type="match status" value="1"/>
</dbReference>
<dbReference type="FunFam" id="1.10.287.610:FF:000002">
    <property type="entry name" value="DNA ligase"/>
    <property type="match status" value="1"/>
</dbReference>
<dbReference type="FunFam" id="2.40.50.140:FF:000012">
    <property type="entry name" value="DNA ligase"/>
    <property type="match status" value="1"/>
</dbReference>
<dbReference type="FunFam" id="3.30.470.30:FF:000001">
    <property type="entry name" value="DNA ligase"/>
    <property type="match status" value="1"/>
</dbReference>
<dbReference type="Gene3D" id="6.20.10.30">
    <property type="match status" value="1"/>
</dbReference>
<dbReference type="Gene3D" id="1.10.150.20">
    <property type="entry name" value="5' to 3' exonuclease, C-terminal subdomain"/>
    <property type="match status" value="2"/>
</dbReference>
<dbReference type="Gene3D" id="3.40.50.10190">
    <property type="entry name" value="BRCT domain"/>
    <property type="match status" value="1"/>
</dbReference>
<dbReference type="Gene3D" id="3.30.470.30">
    <property type="entry name" value="DNA ligase/mRNA capping enzyme"/>
    <property type="match status" value="1"/>
</dbReference>
<dbReference type="Gene3D" id="1.10.287.610">
    <property type="entry name" value="Helix hairpin bin"/>
    <property type="match status" value="1"/>
</dbReference>
<dbReference type="Gene3D" id="2.40.50.140">
    <property type="entry name" value="Nucleic acid-binding proteins"/>
    <property type="match status" value="1"/>
</dbReference>
<dbReference type="HAMAP" id="MF_01588">
    <property type="entry name" value="DNA_ligase_A"/>
    <property type="match status" value="1"/>
</dbReference>
<dbReference type="InterPro" id="IPR001357">
    <property type="entry name" value="BRCT_dom"/>
</dbReference>
<dbReference type="InterPro" id="IPR036420">
    <property type="entry name" value="BRCT_dom_sf"/>
</dbReference>
<dbReference type="InterPro" id="IPR041663">
    <property type="entry name" value="DisA/LigA_HHH"/>
</dbReference>
<dbReference type="InterPro" id="IPR001679">
    <property type="entry name" value="DNA_ligase"/>
</dbReference>
<dbReference type="InterPro" id="IPR018239">
    <property type="entry name" value="DNA_ligase_AS"/>
</dbReference>
<dbReference type="InterPro" id="IPR033136">
    <property type="entry name" value="DNA_ligase_CS"/>
</dbReference>
<dbReference type="InterPro" id="IPR013839">
    <property type="entry name" value="DNAligase_adenylation"/>
</dbReference>
<dbReference type="InterPro" id="IPR013840">
    <property type="entry name" value="DNAligase_N"/>
</dbReference>
<dbReference type="InterPro" id="IPR003583">
    <property type="entry name" value="Hlx-hairpin-Hlx_DNA-bd_motif"/>
</dbReference>
<dbReference type="InterPro" id="IPR012340">
    <property type="entry name" value="NA-bd_OB-fold"/>
</dbReference>
<dbReference type="InterPro" id="IPR004150">
    <property type="entry name" value="NAD_DNA_ligase_OB"/>
</dbReference>
<dbReference type="InterPro" id="IPR010994">
    <property type="entry name" value="RuvA_2-like"/>
</dbReference>
<dbReference type="InterPro" id="IPR004149">
    <property type="entry name" value="Znf_DNAligase_C4"/>
</dbReference>
<dbReference type="NCBIfam" id="TIGR00575">
    <property type="entry name" value="dnlj"/>
    <property type="match status" value="1"/>
</dbReference>
<dbReference type="NCBIfam" id="NF005932">
    <property type="entry name" value="PRK07956.1"/>
    <property type="match status" value="1"/>
</dbReference>
<dbReference type="PANTHER" id="PTHR23389">
    <property type="entry name" value="CHROMOSOME TRANSMISSION FIDELITY FACTOR 18"/>
    <property type="match status" value="1"/>
</dbReference>
<dbReference type="PANTHER" id="PTHR23389:SF9">
    <property type="entry name" value="DNA LIGASE"/>
    <property type="match status" value="1"/>
</dbReference>
<dbReference type="Pfam" id="PF00533">
    <property type="entry name" value="BRCT"/>
    <property type="match status" value="1"/>
</dbReference>
<dbReference type="Pfam" id="PF01653">
    <property type="entry name" value="DNA_ligase_aden"/>
    <property type="match status" value="1"/>
</dbReference>
<dbReference type="Pfam" id="PF03120">
    <property type="entry name" value="DNA_ligase_OB"/>
    <property type="match status" value="1"/>
</dbReference>
<dbReference type="Pfam" id="PF03119">
    <property type="entry name" value="DNA_ligase_ZBD"/>
    <property type="match status" value="1"/>
</dbReference>
<dbReference type="Pfam" id="PF12826">
    <property type="entry name" value="HHH_2"/>
    <property type="match status" value="1"/>
</dbReference>
<dbReference type="PIRSF" id="PIRSF001604">
    <property type="entry name" value="LigA"/>
    <property type="match status" value="1"/>
</dbReference>
<dbReference type="SMART" id="SM00292">
    <property type="entry name" value="BRCT"/>
    <property type="match status" value="1"/>
</dbReference>
<dbReference type="SMART" id="SM00278">
    <property type="entry name" value="HhH1"/>
    <property type="match status" value="3"/>
</dbReference>
<dbReference type="SMART" id="SM00532">
    <property type="entry name" value="LIGANc"/>
    <property type="match status" value="1"/>
</dbReference>
<dbReference type="SUPFAM" id="SSF52113">
    <property type="entry name" value="BRCT domain"/>
    <property type="match status" value="1"/>
</dbReference>
<dbReference type="SUPFAM" id="SSF56091">
    <property type="entry name" value="DNA ligase/mRNA capping enzyme, catalytic domain"/>
    <property type="match status" value="1"/>
</dbReference>
<dbReference type="SUPFAM" id="SSF50249">
    <property type="entry name" value="Nucleic acid-binding proteins"/>
    <property type="match status" value="1"/>
</dbReference>
<dbReference type="SUPFAM" id="SSF47781">
    <property type="entry name" value="RuvA domain 2-like"/>
    <property type="match status" value="1"/>
</dbReference>
<dbReference type="PROSITE" id="PS50172">
    <property type="entry name" value="BRCT"/>
    <property type="match status" value="1"/>
</dbReference>
<dbReference type="PROSITE" id="PS01055">
    <property type="entry name" value="DNA_LIGASE_N1"/>
    <property type="match status" value="1"/>
</dbReference>
<dbReference type="PROSITE" id="PS01056">
    <property type="entry name" value="DNA_LIGASE_N2"/>
    <property type="match status" value="1"/>
</dbReference>
<accession>Q8XZJ7</accession>
<gene>
    <name evidence="1" type="primary">ligA</name>
    <name type="ordered locus">RSc1398</name>
</gene>
<comment type="function">
    <text evidence="1">DNA ligase that catalyzes the formation of phosphodiester linkages between 5'-phosphoryl and 3'-hydroxyl groups in double-stranded DNA using NAD as a coenzyme and as the energy source for the reaction. It is essential for DNA replication and repair of damaged DNA.</text>
</comment>
<comment type="catalytic activity">
    <reaction evidence="1">
        <text>NAD(+) + (deoxyribonucleotide)n-3'-hydroxyl + 5'-phospho-(deoxyribonucleotide)m = (deoxyribonucleotide)n+m + AMP + beta-nicotinamide D-nucleotide.</text>
        <dbReference type="EC" id="6.5.1.2"/>
    </reaction>
</comment>
<comment type="cofactor">
    <cofactor evidence="1">
        <name>Mg(2+)</name>
        <dbReference type="ChEBI" id="CHEBI:18420"/>
    </cofactor>
    <cofactor evidence="1">
        <name>Mn(2+)</name>
        <dbReference type="ChEBI" id="CHEBI:29035"/>
    </cofactor>
</comment>
<comment type="similarity">
    <text evidence="1">Belongs to the NAD-dependent DNA ligase family. LigA subfamily.</text>
</comment>
<sequence>MSKTEHPASGASPETRAAALRATLNRYAHEYYVLDQPSVPDAEYDRLYRELEALEAEHPELRTPDSPTLRVGGAVLPEFAPVRHVVPMLSIRTETDTTAGGALDFDASVRRELGLAESDPPVEYAAELKFDGLAINLRYEKGFLVQAATRGDGATGEDVTQNIRTIRQIPLGLRPVGGAVPDVLEVRGEVYMRRDDFERLNARQRERGDKTFVNPRNTAAGAVRQLDPKMAAERPLSFFAYGLGEAAGWSGMPDTHSGMLDALVAYGFPVSKERAAVKGGEGLVQFHAAIGAKRDSLPFDIDGVVYKVNSLALQRELGFRTREPRWAVAHKYPAQEALTTVESIGVQVGRTGAITPVARLVPVFVGGVTVTNATLHNEDEVRRKDVRVGDTVIVRRAGDVIPEVVAVVLERRPMEDVPGSDLFNPTQQPKHPPFELPRSCPVCGSHVVREEGEAVARCSGGLFCSAQRKEAIRHFAGRRMMDIEGLGERYIDNLVELEYVHGIADLYRLTLDDFLEMKRRADERDGVTPETVAAGKIATKWAENLLDGIRASKTPPLARFLFAMGIRHVGESTAKTLADWLGSLAIVRRAPAPLLLTLPDVGATVAEAIADFFAEPKNQQALDALLTAGVAPQGEHPPSAKLRDQLEPAELYAALGVPKLTAIRSKQLATLVPSLAQLANVDTAQLEGLPADVAASLLAWLDADDHRTRLGTLDALRAELLAAMPAGAAEEGALSGKTVVLTGTLPTLSRDEAKAMLEAAGAKVSGSVSKKTDYVVAGVEAGSKLARAQELGVRVLDEAGMLALLQNPPGDSA</sequence>
<protein>
    <recommendedName>
        <fullName evidence="1">DNA ligase</fullName>
        <ecNumber evidence="1">6.5.1.2</ecNumber>
    </recommendedName>
    <alternativeName>
        <fullName evidence="1">Polydeoxyribonucleotide synthase [NAD(+)]</fullName>
    </alternativeName>
</protein>
<organism>
    <name type="scientific">Ralstonia nicotianae (strain ATCC BAA-1114 / GMI1000)</name>
    <name type="common">Ralstonia solanacearum</name>
    <dbReference type="NCBI Taxonomy" id="267608"/>
    <lineage>
        <taxon>Bacteria</taxon>
        <taxon>Pseudomonadati</taxon>
        <taxon>Pseudomonadota</taxon>
        <taxon>Betaproteobacteria</taxon>
        <taxon>Burkholderiales</taxon>
        <taxon>Burkholderiaceae</taxon>
        <taxon>Ralstonia</taxon>
        <taxon>Ralstonia solanacearum species complex</taxon>
    </lineage>
</organism>
<proteinExistence type="inferred from homology"/>
<keyword id="KW-0227">DNA damage</keyword>
<keyword id="KW-0234">DNA repair</keyword>
<keyword id="KW-0235">DNA replication</keyword>
<keyword id="KW-0436">Ligase</keyword>
<keyword id="KW-0460">Magnesium</keyword>
<keyword id="KW-0464">Manganese</keyword>
<keyword id="KW-0479">Metal-binding</keyword>
<keyword id="KW-0520">NAD</keyword>
<keyword id="KW-1185">Reference proteome</keyword>
<keyword id="KW-0862">Zinc</keyword>